<protein>
    <recommendedName>
        <fullName evidence="1">Ribonuclease 3</fullName>
        <ecNumber evidence="1">3.1.26.3</ecNumber>
    </recommendedName>
    <alternativeName>
        <fullName evidence="1">Ribonuclease III</fullName>
        <shortName evidence="1">RNase III</shortName>
    </alternativeName>
</protein>
<feature type="chain" id="PRO_1000094093" description="Ribonuclease 3">
    <location>
        <begin position="1"/>
        <end position="230"/>
    </location>
</feature>
<feature type="domain" description="RNase III" evidence="1">
    <location>
        <begin position="10"/>
        <end position="133"/>
    </location>
</feature>
<feature type="domain" description="DRBM" evidence="1">
    <location>
        <begin position="161"/>
        <end position="230"/>
    </location>
</feature>
<feature type="active site" evidence="1">
    <location>
        <position position="50"/>
    </location>
</feature>
<feature type="active site" evidence="1">
    <location>
        <position position="122"/>
    </location>
</feature>
<feature type="binding site" evidence="1">
    <location>
        <position position="46"/>
    </location>
    <ligand>
        <name>Mg(2+)</name>
        <dbReference type="ChEBI" id="CHEBI:18420"/>
    </ligand>
</feature>
<feature type="binding site" evidence="1">
    <location>
        <position position="119"/>
    </location>
    <ligand>
        <name>Mg(2+)</name>
        <dbReference type="ChEBI" id="CHEBI:18420"/>
    </ligand>
</feature>
<feature type="binding site" evidence="1">
    <location>
        <position position="122"/>
    </location>
    <ligand>
        <name>Mg(2+)</name>
        <dbReference type="ChEBI" id="CHEBI:18420"/>
    </ligand>
</feature>
<comment type="function">
    <text evidence="1">Digests double-stranded RNA. Involved in the processing of primary rRNA transcript to yield the immediate precursors to the large and small rRNAs (23S and 16S). Processes some mRNAs, and tRNAs when they are encoded in the rRNA operon. Processes pre-crRNA and tracrRNA of type II CRISPR loci if present in the organism.</text>
</comment>
<comment type="catalytic activity">
    <reaction evidence="1">
        <text>Endonucleolytic cleavage to 5'-phosphomonoester.</text>
        <dbReference type="EC" id="3.1.26.3"/>
    </reaction>
</comment>
<comment type="cofactor">
    <cofactor evidence="1">
        <name>Mg(2+)</name>
        <dbReference type="ChEBI" id="CHEBI:18420"/>
    </cofactor>
</comment>
<comment type="subunit">
    <text evidence="1">Homodimer.</text>
</comment>
<comment type="subcellular location">
    <subcellularLocation>
        <location evidence="1">Cytoplasm</location>
    </subcellularLocation>
</comment>
<comment type="similarity">
    <text evidence="1">Belongs to the ribonuclease III family.</text>
</comment>
<keyword id="KW-0963">Cytoplasm</keyword>
<keyword id="KW-0255">Endonuclease</keyword>
<keyword id="KW-0378">Hydrolase</keyword>
<keyword id="KW-0460">Magnesium</keyword>
<keyword id="KW-0479">Metal-binding</keyword>
<keyword id="KW-0507">mRNA processing</keyword>
<keyword id="KW-0540">Nuclease</keyword>
<keyword id="KW-0694">RNA-binding</keyword>
<keyword id="KW-0698">rRNA processing</keyword>
<keyword id="KW-0699">rRNA-binding</keyword>
<keyword id="KW-0819">tRNA processing</keyword>
<dbReference type="EC" id="3.1.26.3" evidence="1"/>
<dbReference type="EMBL" id="CU459141">
    <property type="protein sequence ID" value="CAM85886.1"/>
    <property type="molecule type" value="Genomic_DNA"/>
</dbReference>
<dbReference type="RefSeq" id="WP_000160699.1">
    <property type="nucleotide sequence ID" value="NZ_JBDGFB010000021.1"/>
</dbReference>
<dbReference type="SMR" id="B0VCU0"/>
<dbReference type="EnsemblBacteria" id="CAM85886">
    <property type="protein sequence ID" value="CAM85886"/>
    <property type="gene ID" value="ABAYE0941"/>
</dbReference>
<dbReference type="GeneID" id="92894829"/>
<dbReference type="KEGG" id="aby:ABAYE0941"/>
<dbReference type="HOGENOM" id="CLU_000907_1_1_6"/>
<dbReference type="GO" id="GO:0005737">
    <property type="term" value="C:cytoplasm"/>
    <property type="evidence" value="ECO:0007669"/>
    <property type="project" value="UniProtKB-SubCell"/>
</dbReference>
<dbReference type="GO" id="GO:0046872">
    <property type="term" value="F:metal ion binding"/>
    <property type="evidence" value="ECO:0007669"/>
    <property type="project" value="UniProtKB-KW"/>
</dbReference>
<dbReference type="GO" id="GO:0004525">
    <property type="term" value="F:ribonuclease III activity"/>
    <property type="evidence" value="ECO:0007669"/>
    <property type="project" value="UniProtKB-UniRule"/>
</dbReference>
<dbReference type="GO" id="GO:0019843">
    <property type="term" value="F:rRNA binding"/>
    <property type="evidence" value="ECO:0007669"/>
    <property type="project" value="UniProtKB-KW"/>
</dbReference>
<dbReference type="GO" id="GO:0006397">
    <property type="term" value="P:mRNA processing"/>
    <property type="evidence" value="ECO:0007669"/>
    <property type="project" value="UniProtKB-UniRule"/>
</dbReference>
<dbReference type="GO" id="GO:0006364">
    <property type="term" value="P:rRNA processing"/>
    <property type="evidence" value="ECO:0007669"/>
    <property type="project" value="UniProtKB-UniRule"/>
</dbReference>
<dbReference type="GO" id="GO:0008033">
    <property type="term" value="P:tRNA processing"/>
    <property type="evidence" value="ECO:0007669"/>
    <property type="project" value="UniProtKB-KW"/>
</dbReference>
<dbReference type="CDD" id="cd10845">
    <property type="entry name" value="DSRM_RNAse_III_family"/>
    <property type="match status" value="1"/>
</dbReference>
<dbReference type="CDD" id="cd00593">
    <property type="entry name" value="RIBOc"/>
    <property type="match status" value="1"/>
</dbReference>
<dbReference type="FunFam" id="1.10.1520.10:FF:000001">
    <property type="entry name" value="Ribonuclease 3"/>
    <property type="match status" value="1"/>
</dbReference>
<dbReference type="FunFam" id="3.30.160.20:FF:000003">
    <property type="entry name" value="Ribonuclease 3"/>
    <property type="match status" value="1"/>
</dbReference>
<dbReference type="Gene3D" id="3.30.160.20">
    <property type="match status" value="1"/>
</dbReference>
<dbReference type="Gene3D" id="1.10.1520.10">
    <property type="entry name" value="Ribonuclease III domain"/>
    <property type="match status" value="1"/>
</dbReference>
<dbReference type="HAMAP" id="MF_00104">
    <property type="entry name" value="RNase_III"/>
    <property type="match status" value="1"/>
</dbReference>
<dbReference type="InterPro" id="IPR014720">
    <property type="entry name" value="dsRBD_dom"/>
</dbReference>
<dbReference type="InterPro" id="IPR011907">
    <property type="entry name" value="RNase_III"/>
</dbReference>
<dbReference type="InterPro" id="IPR000999">
    <property type="entry name" value="RNase_III_dom"/>
</dbReference>
<dbReference type="InterPro" id="IPR036389">
    <property type="entry name" value="RNase_III_sf"/>
</dbReference>
<dbReference type="NCBIfam" id="TIGR02191">
    <property type="entry name" value="RNaseIII"/>
    <property type="match status" value="1"/>
</dbReference>
<dbReference type="PANTHER" id="PTHR14950">
    <property type="entry name" value="DICER-RELATED"/>
    <property type="match status" value="1"/>
</dbReference>
<dbReference type="PANTHER" id="PTHR14950:SF37">
    <property type="entry name" value="ENDORIBONUCLEASE DICER"/>
    <property type="match status" value="1"/>
</dbReference>
<dbReference type="Pfam" id="PF00035">
    <property type="entry name" value="dsrm"/>
    <property type="match status" value="1"/>
</dbReference>
<dbReference type="Pfam" id="PF14622">
    <property type="entry name" value="Ribonucleas_3_3"/>
    <property type="match status" value="1"/>
</dbReference>
<dbReference type="SMART" id="SM00358">
    <property type="entry name" value="DSRM"/>
    <property type="match status" value="1"/>
</dbReference>
<dbReference type="SMART" id="SM00535">
    <property type="entry name" value="RIBOc"/>
    <property type="match status" value="1"/>
</dbReference>
<dbReference type="SUPFAM" id="SSF54768">
    <property type="entry name" value="dsRNA-binding domain-like"/>
    <property type="match status" value="1"/>
</dbReference>
<dbReference type="SUPFAM" id="SSF69065">
    <property type="entry name" value="RNase III domain-like"/>
    <property type="match status" value="1"/>
</dbReference>
<dbReference type="PROSITE" id="PS50137">
    <property type="entry name" value="DS_RBD"/>
    <property type="match status" value="1"/>
</dbReference>
<dbReference type="PROSITE" id="PS00517">
    <property type="entry name" value="RNASE_3_1"/>
    <property type="match status" value="1"/>
</dbReference>
<dbReference type="PROSITE" id="PS50142">
    <property type="entry name" value="RNASE_3_2"/>
    <property type="match status" value="1"/>
</dbReference>
<gene>
    <name evidence="1" type="primary">rnc</name>
    <name type="ordered locus">ABAYE0941</name>
</gene>
<sequence length="230" mass="26285">MTKHQFKLSDPRLLSRIGYQFKQPELLQLALTHRSVSHKYNYERLEFLGDSLLGMIIANYLYHAYPHENEGRLTRMRATLVRQEALGKIATDLQLSRCLILSTGELKSGGHHRESILADTVEAIIGAIYLDSSDLNLLKDIVLKWYTPYLDHIEPTDQLKDPKSRLQEYLQARKKPLPVYEVVDIQGDAPHQHFKVECLVDGLSKIHGEGSSRRFAEQAAAAEILKLLEQ</sequence>
<organism>
    <name type="scientific">Acinetobacter baumannii (strain AYE)</name>
    <dbReference type="NCBI Taxonomy" id="509173"/>
    <lineage>
        <taxon>Bacteria</taxon>
        <taxon>Pseudomonadati</taxon>
        <taxon>Pseudomonadota</taxon>
        <taxon>Gammaproteobacteria</taxon>
        <taxon>Moraxellales</taxon>
        <taxon>Moraxellaceae</taxon>
        <taxon>Acinetobacter</taxon>
        <taxon>Acinetobacter calcoaceticus/baumannii complex</taxon>
    </lineage>
</organism>
<proteinExistence type="inferred from homology"/>
<name>RNC_ACIBY</name>
<reference key="1">
    <citation type="journal article" date="2008" name="PLoS ONE">
        <title>Comparative analysis of Acinetobacters: three genomes for three lifestyles.</title>
        <authorList>
            <person name="Vallenet D."/>
            <person name="Nordmann P."/>
            <person name="Barbe V."/>
            <person name="Poirel L."/>
            <person name="Mangenot S."/>
            <person name="Bataille E."/>
            <person name="Dossat C."/>
            <person name="Gas S."/>
            <person name="Kreimeyer A."/>
            <person name="Lenoble P."/>
            <person name="Oztas S."/>
            <person name="Poulain J."/>
            <person name="Segurens B."/>
            <person name="Robert C."/>
            <person name="Abergel C."/>
            <person name="Claverie J.-M."/>
            <person name="Raoult D."/>
            <person name="Medigue C."/>
            <person name="Weissenbach J."/>
            <person name="Cruveiller S."/>
        </authorList>
    </citation>
    <scope>NUCLEOTIDE SEQUENCE [LARGE SCALE GENOMIC DNA]</scope>
    <source>
        <strain>AYE</strain>
    </source>
</reference>
<accession>B0VCU0</accession>
<evidence type="ECO:0000255" key="1">
    <source>
        <dbReference type="HAMAP-Rule" id="MF_00104"/>
    </source>
</evidence>